<keyword id="KW-0002">3D-structure</keyword>
<keyword id="KW-0214">Dental caries</keyword>
<keyword id="KW-0328">Glycosyltransferase</keyword>
<keyword id="KW-1185">Reference proteome</keyword>
<keyword id="KW-0677">Repeat</keyword>
<keyword id="KW-0964">Secreted</keyword>
<keyword id="KW-0732">Signal</keyword>
<keyword id="KW-0808">Transferase</keyword>
<sequence length="1462" mass="163388">METKRRYKMYKVKKHWVTIAVASGLITLGTTTLGSSVSAETEQQTSDKVVTQKSEDDKAASESSQTDAPKTKQAQTEQTQAQSQANVADTSTSITKETPSQNITTQANSDDKTVTNTKSEEAQTSEERTKQAEEAQATASSQALTQAKAELTKQRQTAAQENKNPVDLAAIPNVKQIDGKYYYIGSDGQPKKNFALTVNNKVLYFDKNTGALTDTSQYQFKQGLTKLNNDYTPHNQIVNFENTSLETIDNYVTADSWYRPKDILKNGKTWTASSESDLRPLLMSWWPDKQTQIAYLNYMNQQGLGTGENYTADSSQESLNLAAQTVQVKIETKISQTQQTQWLRDIINSFVKTQPNWNSQTESDTSAGEKDHLQGGALLYSNSDKTAYANSDYRLLNRTPTSQTGKPKYFEDNSSGGYDFLLANDIDNSNPVVQAEQLNWLHYLMNYGSIVANDPEANFDGVRVDAVDNVNADLLQIASDYLKAHYGVDKSEKNAINHLSILEAWSDNDPQYNKDTKGAQLPIDNKLRLSLLYALTRPLEKDASNKNEIRSGLEPVITNSLNNRSAEGKNSERMANYIFIRAHDSEVQTVIAKIIKAQINPKTDGLTFTLDELKQAFKIYNEDMRQAKKKYTQSNIPTAYALMLSNKDSITRLYYGDMYSDDGQYMATKSPYYDAIDTLLKARIKYAAGGQDMKITYVEGDKSHMDWDYTGVLTSVRYGTGANEATDQGSEATKTQGMAVITSNNPSLKLNQNDKVIVNMGTAHKNQEYRPLLLTTKDGLTSYTSDAAAKSLYRKTNDKGELVFDASDIQGYLNPQVSGYLAVWVPVGASDNQDVRVAASNKANATGQVYESSSALDSQLIYEGFSNFQDFVTKDSDYTNKKIAQNVQLFKSWGVTSFEMAPQYVSSEDGSFLDSIIQNGYAFEDRYDLAMSKNNKYGSQQDMINAVKALHKSGIQVIADWVPDQIYNLPGKEVVTATRVNDYGEYRKDSEIKNTLYAANTKSNGKDYQAKYGGAFLSELAAKYPSIFNRTQISNGKKIDPSEKITAWKAKYFNGTNILGRGVGYVLKDNASDKYFELKGNQTYLPKQMTNKEASTGFVNDGNGMTFYSTSGYQAKNSFVQDAKGNWYYFDNNGHMVYGLQHLNGEVQYFLSNGVQLRESFLENADGSKNYFGHLGNRYSNGYYSFDNDSKWRYFDASGVMAVGLKTINGNTQYFDQDGYQVKGAWITGSDGKKRYFDDGSGNMAVNRFANDKNGDWYYLNSDGIALVGVQTINGKTYYFGQDGKQIKGKIITDNGKLKYFLANSGELARNIFATDSQNNWYYFGSDGVAVTGSQTIAGKKLYFASDGKQVKGSFVTYNGKVHYYHADSGELQVNRFEADKDGNWYYLDSNGEALTGSQRINGQRVFFTREGKQVKGDVAYDERGLLRYYDKNSGNMVYNKVVTLANGRRIGIDRWGIARYY</sequence>
<proteinExistence type="evidence at protein level"/>
<dbReference type="EC" id="2.4.1.5"/>
<dbReference type="EMBL" id="M29296">
    <property type="protein sequence ID" value="AAA26895.1"/>
    <property type="molecule type" value="Genomic_DNA"/>
</dbReference>
<dbReference type="EMBL" id="D88653">
    <property type="protein sequence ID" value="BAA26103.1"/>
    <property type="molecule type" value="Genomic_DNA"/>
</dbReference>
<dbReference type="EMBL" id="D88656">
    <property type="protein sequence ID" value="BAA26107.1"/>
    <property type="molecule type" value="Genomic_DNA"/>
</dbReference>
<dbReference type="EMBL" id="D88659">
    <property type="protein sequence ID" value="BAA26111.1"/>
    <property type="molecule type" value="Genomic_DNA"/>
</dbReference>
<dbReference type="EMBL" id="D88662">
    <property type="protein sequence ID" value="BAA26115.1"/>
    <property type="molecule type" value="Genomic_DNA"/>
</dbReference>
<dbReference type="EMBL" id="D89979">
    <property type="protein sequence ID" value="BAA26121.1"/>
    <property type="molecule type" value="Genomic_DNA"/>
</dbReference>
<dbReference type="EMBL" id="AE014133">
    <property type="protein sequence ID" value="AAN58619.1"/>
    <property type="molecule type" value="Genomic_DNA"/>
</dbReference>
<dbReference type="RefSeq" id="NP_721313.1">
    <property type="nucleotide sequence ID" value="NC_004350.2"/>
</dbReference>
<dbReference type="RefSeq" id="WP_002352262.1">
    <property type="nucleotide sequence ID" value="NC_004350.2"/>
</dbReference>
<dbReference type="PDB" id="8FN5">
    <property type="method" value="X-ray"/>
    <property type="resolution" value="1.92 A"/>
    <property type="chains" value="A/B=423-1054"/>
</dbReference>
<dbReference type="PDBsum" id="8FN5"/>
<dbReference type="SMR" id="P49331"/>
<dbReference type="STRING" id="210007.SMU_910"/>
<dbReference type="ChEMBL" id="CHEMBL3822352"/>
<dbReference type="CAZy" id="GH70">
    <property type="family name" value="Glycoside Hydrolase Family 70"/>
</dbReference>
<dbReference type="KEGG" id="smu:SMU_910"/>
<dbReference type="PATRIC" id="fig|210007.7.peg.813"/>
<dbReference type="eggNOG" id="COG0366">
    <property type="taxonomic scope" value="Bacteria"/>
</dbReference>
<dbReference type="eggNOG" id="COG5263">
    <property type="taxonomic scope" value="Bacteria"/>
</dbReference>
<dbReference type="HOGENOM" id="CLU_001623_1_0_9"/>
<dbReference type="OrthoDB" id="2032428at2"/>
<dbReference type="PhylomeDB" id="P49331"/>
<dbReference type="SABIO-RK" id="P49331"/>
<dbReference type="PHI-base" id="PHI:7055"/>
<dbReference type="Proteomes" id="UP000002512">
    <property type="component" value="Chromosome"/>
</dbReference>
<dbReference type="GO" id="GO:0005576">
    <property type="term" value="C:extracellular region"/>
    <property type="evidence" value="ECO:0007669"/>
    <property type="project" value="UniProtKB-SubCell"/>
</dbReference>
<dbReference type="GO" id="GO:0047849">
    <property type="term" value="F:dextransucrase activity"/>
    <property type="evidence" value="ECO:0007669"/>
    <property type="project" value="UniProtKB-EC"/>
</dbReference>
<dbReference type="GO" id="GO:0046527">
    <property type="term" value="F:glucosyltransferase activity"/>
    <property type="evidence" value="ECO:0007669"/>
    <property type="project" value="InterPro"/>
</dbReference>
<dbReference type="GO" id="GO:0009250">
    <property type="term" value="P:glucan biosynthetic process"/>
    <property type="evidence" value="ECO:0007669"/>
    <property type="project" value="InterPro"/>
</dbReference>
<dbReference type="Gene3D" id="2.30.30.20">
    <property type="entry name" value="Aspartate carbamoyltransferase regulatory subunit, C-terminal domain"/>
    <property type="match status" value="1"/>
</dbReference>
<dbReference type="Gene3D" id="2.10.270.10">
    <property type="entry name" value="Cholin Binding"/>
    <property type="match status" value="3"/>
</dbReference>
<dbReference type="Gene3D" id="2.30.30.420">
    <property type="entry name" value="glucansucrase"/>
    <property type="match status" value="1"/>
</dbReference>
<dbReference type="Gene3D" id="3.20.20.80">
    <property type="entry name" value="Glycosidases"/>
    <property type="match status" value="2"/>
</dbReference>
<dbReference type="Gene3D" id="2.60.40.1180">
    <property type="entry name" value="Golgi alpha-mannosidase II"/>
    <property type="match status" value="1"/>
</dbReference>
<dbReference type="InterPro" id="IPR018337">
    <property type="entry name" value="Cell_wall/Cho-bd_repeat"/>
</dbReference>
<dbReference type="InterPro" id="IPR027636">
    <property type="entry name" value="Glucan-bd_rpt"/>
</dbReference>
<dbReference type="InterPro" id="IPR003318">
    <property type="entry name" value="Glyco_hydro70cat"/>
</dbReference>
<dbReference type="InterPro" id="IPR013780">
    <property type="entry name" value="Glyco_hydro_b"/>
</dbReference>
<dbReference type="InterPro" id="IPR017853">
    <property type="entry name" value="Glycoside_hydrolase_SF"/>
</dbReference>
<dbReference type="InterPro" id="IPR022263">
    <property type="entry name" value="KxYKxGKxW"/>
</dbReference>
<dbReference type="NCBIfam" id="TIGR04035">
    <property type="entry name" value="glucan_65_rpt"/>
    <property type="match status" value="5"/>
</dbReference>
<dbReference type="NCBIfam" id="TIGR03715">
    <property type="entry name" value="KxYKxGKxW"/>
    <property type="match status" value="1"/>
</dbReference>
<dbReference type="Pfam" id="PF01473">
    <property type="entry name" value="Choline_bind_1"/>
    <property type="match status" value="1"/>
</dbReference>
<dbReference type="Pfam" id="PF19127">
    <property type="entry name" value="Choline_bind_3"/>
    <property type="match status" value="4"/>
</dbReference>
<dbReference type="Pfam" id="PF02324">
    <property type="entry name" value="Glyco_hydro_70"/>
    <property type="match status" value="1"/>
</dbReference>
<dbReference type="Pfam" id="PF19258">
    <property type="entry name" value="KxYKxGKxW_sig"/>
    <property type="match status" value="1"/>
</dbReference>
<dbReference type="SUPFAM" id="SSF51445">
    <property type="entry name" value="(Trans)glycosidases"/>
    <property type="match status" value="2"/>
</dbReference>
<dbReference type="SUPFAM" id="SSF69360">
    <property type="entry name" value="Cell wall binding repeat"/>
    <property type="match status" value="3"/>
</dbReference>
<dbReference type="PROSITE" id="PS51170">
    <property type="entry name" value="CW"/>
    <property type="match status" value="14"/>
</dbReference>
<comment type="function">
    <text>Production of extracellular glucans, that are thought to play a key role in the development of the dental plaque because of their ability to adhere to smooth surfaces and mediate the aggregation of bacterial cells and food debris.</text>
</comment>
<comment type="catalytic activity">
    <reaction>
        <text>[(1-&gt;6)-alpha-D-glucosyl](n) + sucrose = [(1-&gt;6)-alpha-D-glucosyl](n+1) + D-fructose</text>
        <dbReference type="Rhea" id="RHEA:18825"/>
        <dbReference type="Rhea" id="RHEA-COMP:11144"/>
        <dbReference type="Rhea" id="RHEA-COMP:11145"/>
        <dbReference type="ChEBI" id="CHEBI:17992"/>
        <dbReference type="ChEBI" id="CHEBI:18269"/>
        <dbReference type="ChEBI" id="CHEBI:37721"/>
        <dbReference type="EC" id="2.4.1.5"/>
    </reaction>
</comment>
<comment type="subcellular location">
    <subcellularLocation>
        <location>Secreted</location>
    </subcellularLocation>
</comment>
<comment type="miscellaneous">
    <text>GTF-I synthesizes water-insoluble glucans (alpha 1,3-linked glucose and some 1,6 linkages), GTF-S synthesizes water-soluble glucans (alpha 1,6-glucose). GTF-SI synthesizes both forms of glucans.</text>
</comment>
<comment type="similarity">
    <text evidence="3">Belongs to the glycosyl hydrolase 70 family.</text>
</comment>
<name>GTFD_STRMU</name>
<feature type="signal peptide" evidence="1">
    <location>
        <begin position="1"/>
        <end status="unknown"/>
    </location>
</feature>
<feature type="chain" id="PRO_0000021387" description="Glucosyltransferase-S">
    <location>
        <begin status="unknown"/>
        <end position="1462"/>
    </location>
</feature>
<feature type="repeat" description="Cell wall-binding 1">
    <location>
        <begin position="171"/>
        <end position="190"/>
    </location>
</feature>
<feature type="repeat" description="Cell wall-binding 2">
    <location>
        <begin position="192"/>
        <end position="211"/>
    </location>
</feature>
<feature type="repeat" description="Cell wall-binding 3">
    <location>
        <begin position="1095"/>
        <end position="1115"/>
    </location>
</feature>
<feature type="repeat" description="Cell wall-binding 4">
    <location>
        <begin position="1116"/>
        <end position="1136"/>
    </location>
</feature>
<feature type="repeat" description="Cell wall-binding 5">
    <location>
        <begin position="1137"/>
        <end position="1156"/>
    </location>
</feature>
<feature type="repeat" description="Cell wall-binding 6">
    <location>
        <begin position="1180"/>
        <end position="1201"/>
    </location>
</feature>
<feature type="repeat" description="Cell wall-binding 7">
    <location>
        <begin position="1202"/>
        <end position="1221"/>
    </location>
</feature>
<feature type="repeat" description="Cell wall-binding 8">
    <location>
        <begin position="1223"/>
        <end position="1244"/>
    </location>
</feature>
<feature type="repeat" description="Cell wall-binding 9">
    <location>
        <begin position="1246"/>
        <end position="1266"/>
    </location>
</feature>
<feature type="repeat" description="Cell wall-binding 10">
    <location>
        <begin position="1267"/>
        <end position="1286"/>
    </location>
</feature>
<feature type="repeat" description="Cell wall-binding 11">
    <location>
        <begin position="1310"/>
        <end position="1330"/>
    </location>
</feature>
<feature type="repeat" description="Cell wall-binding 12">
    <location>
        <begin position="1331"/>
        <end position="1350"/>
    </location>
</feature>
<feature type="repeat" description="Cell wall-binding 13">
    <location>
        <begin position="1352"/>
        <end position="1372"/>
    </location>
</feature>
<feature type="repeat" description="Cell wall-binding 14">
    <location>
        <begin position="1374"/>
        <end position="1394"/>
    </location>
</feature>
<feature type="region of interest" description="Disordered" evidence="2">
    <location>
        <begin position="35"/>
        <end position="164"/>
    </location>
</feature>
<feature type="compositionally biased region" description="Polar residues" evidence="2">
    <location>
        <begin position="37"/>
        <end position="52"/>
    </location>
</feature>
<feature type="compositionally biased region" description="Low complexity" evidence="2">
    <location>
        <begin position="71"/>
        <end position="85"/>
    </location>
</feature>
<feature type="compositionally biased region" description="Polar residues" evidence="2">
    <location>
        <begin position="86"/>
        <end position="108"/>
    </location>
</feature>
<feature type="compositionally biased region" description="Basic and acidic residues" evidence="2">
    <location>
        <begin position="109"/>
        <end position="133"/>
    </location>
</feature>
<feature type="compositionally biased region" description="Low complexity" evidence="2">
    <location>
        <begin position="134"/>
        <end position="149"/>
    </location>
</feature>
<feature type="compositionally biased region" description="Polar residues" evidence="2">
    <location>
        <begin position="154"/>
        <end position="163"/>
    </location>
</feature>
<feature type="sequence variant" description="In strain: GS-5, MT4239, MT4245, MT4251, MT4467 and MT8148.">
    <original>Y</original>
    <variation>H</variation>
    <location>
        <position position="10"/>
    </location>
</feature>
<feature type="sequence variant" description="In strain: GS-5, MT4239, MT4245, MT4251, MT4467 and MT8148.">
    <original>I</original>
    <variation>V</variation>
    <location>
        <position position="19"/>
    </location>
</feature>
<feature type="sequence variant" description="In strain: MT4467.">
    <original>K</original>
    <variation>E</variation>
    <location>
        <position position="58"/>
    </location>
</feature>
<feature type="sequence variant" description="In strain: MT4239 and MT4245.">
    <original>A</original>
    <variation>S</variation>
    <location>
        <position position="68"/>
    </location>
</feature>
<feature type="sequence variant" description="In strain: MT4251 and MT8148.">
    <original>A</original>
    <variation>T</variation>
    <location>
        <position position="81"/>
    </location>
</feature>
<feature type="sequence variant" description="In strain: MT4239 and MT4245.">
    <original>T</original>
    <variation>I</variation>
    <location>
        <position position="113"/>
    </location>
</feature>
<feature type="sequence variant" description="In strain: MT4239, MT4245 and MT8148.">
    <original>A</original>
    <variation>V</variation>
    <location>
        <position position="122"/>
    </location>
</feature>
<feature type="sequence variant" description="In strain: GS-5 and MT4467.">
    <original>A</original>
    <variation>S</variation>
    <location>
        <position position="132"/>
    </location>
</feature>
<feature type="sequence variant" description="In strain: MT4245.">
    <original>A</original>
    <variation>V</variation>
    <location>
        <position position="135"/>
    </location>
</feature>
<feature type="sequence variant" description="In strain: GS-5, MT4239, MT4245, MT4251, MT4467 and MT8148.">
    <original>A</original>
    <variation>T</variation>
    <location>
        <position position="137"/>
    </location>
</feature>
<feature type="sequence variant" description="In strain: MT4239.">
    <original>V</original>
    <variation>L</variation>
    <location>
        <position position="202"/>
    </location>
</feature>
<feature type="sequence variant" description="In strain: MT8148.">
    <original>D</original>
    <variation>N</variation>
    <location>
        <position position="255"/>
    </location>
</feature>
<feature type="sequence variant" description="In strain: MT4239, MT4245 and MT4251.">
    <original>E</original>
    <variation>D</variation>
    <location>
        <position position="275"/>
    </location>
</feature>
<feature type="sequence variant" description="In strain: MT4239, MT4245 and MT4251.">
    <original>D</original>
    <variation>N</variation>
    <location>
        <position position="288"/>
    </location>
</feature>
<feature type="sequence variant" description="In strain: MT4245.">
    <original>Q</original>
    <variation>H</variation>
    <location>
        <position position="301"/>
    </location>
</feature>
<feature type="sequence variant" description="In strain: MT4239 and MT4251.">
    <original>D</original>
    <variation>N</variation>
    <location>
        <position position="313"/>
    </location>
</feature>
<feature type="sequence variant" description="In strain: MT4239.">
    <original>E</original>
    <variation>K</variation>
    <location>
        <position position="317"/>
    </location>
</feature>
<feature type="sequence variant" description="In strain: MT4239.">
    <original>V</original>
    <variation>F</variation>
    <location>
        <position position="328"/>
    </location>
</feature>
<feature type="sequence variant" description="In strain: MT4239, MT4251 and MT4467.">
    <original>F</original>
    <variation>L</variation>
    <location>
        <position position="350"/>
    </location>
</feature>
<feature type="sequence variant" description="In strain: MT4251.">
    <original>KKKYTQ</original>
    <variation>EKEYTL</variation>
    <location>
        <begin position="628"/>
        <end position="633"/>
    </location>
</feature>
<feature type="sequence variant" description="In strain: MT4239.">
    <original>A</original>
    <variation>S</variation>
    <location>
        <position position="688"/>
    </location>
</feature>
<feature type="sequence variant" description="In strain: MT4251.">
    <original>TDQGSEA</original>
    <variation>ADKGNDS</variation>
    <location>
        <begin position="726"/>
        <end position="732"/>
    </location>
</feature>
<feature type="sequence variant" description="In strain: MT4239 and MT4245.">
    <original>TDQGS</original>
    <variation>ADKGN</variation>
    <location>
        <begin position="726"/>
        <end position="730"/>
    </location>
</feature>
<feature type="sequence variant" description="In strain: GS-5, MT4239, MT4245, MT4251, MT4467 and MT8148.">
    <original>T</original>
    <variation>A</variation>
    <location>
        <position position="762"/>
    </location>
</feature>
<feature type="sequence variant" description="In strain: MT4251.">
    <original>D</original>
    <variation>Y</variation>
    <location>
        <position position="964"/>
    </location>
</feature>
<feature type="sequence variant" description="In strain: MT4245 and MT4251.">
    <original>E</original>
    <variation>K</variation>
    <location>
        <position position="1019"/>
    </location>
</feature>
<feature type="sequence variant" description="In strain: MT4251.">
    <original>LG</original>
    <variation>IR</variation>
    <location>
        <begin position="1059"/>
        <end position="1060"/>
    </location>
</feature>
<feature type="sequence variant" description="In strain: MT4245.">
    <original>G</original>
    <variation>R</variation>
    <location>
        <position position="1060"/>
    </location>
</feature>
<feature type="sequence variant" description="In strain: MT4239.">
    <original>G</original>
    <variation>R</variation>
    <location>
        <position position="1080"/>
    </location>
</feature>
<feature type="sequence variant" description="In strain: GS-5.">
    <original>H</original>
    <variation>Q</variation>
    <location>
        <position position="1142"/>
    </location>
</feature>
<feature type="sequence variant" description="In strain: MT4239.">
    <original>S</original>
    <variation>N</variation>
    <location>
        <position position="1198"/>
    </location>
</feature>
<feature type="sequence variant" description="In strain: MT4251 and MT4467.">
    <original>Y</original>
    <variation>C</variation>
    <location>
        <position position="1220"/>
    </location>
</feature>
<feature type="sequence variant" description="In strain: MT4467.">
    <original>F</original>
    <variation>L</variation>
    <location>
        <position position="1280"/>
    </location>
</feature>
<feature type="sequence variant" description="In strain: MT4245.">
    <original>Q</original>
    <variation>P</variation>
    <location>
        <position position="1282"/>
    </location>
</feature>
<feature type="sequence variant" description="In strain: MT4245.">
    <original>K</original>
    <variation>T</variation>
    <location>
        <position position="1290"/>
    </location>
</feature>
<feature type="sequence variant" description="In strain: MT4245.">
    <original>N</original>
    <variation>D</variation>
    <location>
        <position position="1311"/>
    </location>
</feature>
<feature type="sequence variant" description="In strain: GS-5 and MT4467.">
    <original>G</original>
    <variation>D</variation>
    <location>
        <position position="1403"/>
    </location>
</feature>
<feature type="sequence variant" description="In strain: GS-5.">
    <original>G</original>
    <variation>R</variation>
    <location>
        <position position="1425"/>
    </location>
</feature>
<feature type="sequence variant" description="In strain: MT4467.">
    <original>R</original>
    <variation>K</variation>
    <location>
        <position position="1449"/>
    </location>
</feature>
<feature type="sequence conflict" description="In Ref. 1; AAA26895." evidence="3" ref="1">
    <original>RYYDKNSGNMVYNKVVTLANGRRIGIDRWGIARYY</original>
    <variation>VYR</variation>
    <location>
        <begin position="1428"/>
        <end position="1462"/>
    </location>
</feature>
<feature type="strand" evidence="4">
    <location>
        <begin position="424"/>
        <end position="426"/>
    </location>
</feature>
<feature type="helix" evidence="4">
    <location>
        <begin position="431"/>
        <end position="445"/>
    </location>
</feature>
<feature type="helix" evidence="4">
    <location>
        <begin position="447"/>
        <end position="451"/>
    </location>
</feature>
<feature type="helix" evidence="4">
    <location>
        <begin position="455"/>
        <end position="457"/>
    </location>
</feature>
<feature type="strand" evidence="4">
    <location>
        <begin position="461"/>
        <end position="464"/>
    </location>
</feature>
<feature type="helix" evidence="4">
    <location>
        <begin position="469"/>
        <end position="472"/>
    </location>
</feature>
<feature type="helix" evidence="4">
    <location>
        <begin position="473"/>
        <end position="486"/>
    </location>
</feature>
<feature type="turn" evidence="4">
    <location>
        <begin position="488"/>
        <end position="490"/>
    </location>
</feature>
<feature type="helix" evidence="4">
    <location>
        <begin position="492"/>
        <end position="496"/>
    </location>
</feature>
<feature type="helix" evidence="4">
    <location>
        <begin position="509"/>
        <end position="515"/>
    </location>
</feature>
<feature type="helix" evidence="4">
    <location>
        <begin position="525"/>
        <end position="535"/>
    </location>
</feature>
<feature type="strand" evidence="4">
    <location>
        <begin position="540"/>
        <end position="542"/>
    </location>
</feature>
<feature type="helix" evidence="4">
    <location>
        <begin position="546"/>
        <end position="548"/>
    </location>
</feature>
<feature type="helix" evidence="4">
    <location>
        <begin position="554"/>
        <end position="558"/>
    </location>
</feature>
<feature type="strand" evidence="4">
    <location>
        <begin position="559"/>
        <end position="562"/>
    </location>
</feature>
<feature type="turn" evidence="4">
    <location>
        <begin position="566"/>
        <end position="570"/>
    </location>
</feature>
<feature type="strand" evidence="4">
    <location>
        <begin position="585"/>
        <end position="587"/>
    </location>
</feature>
<feature type="helix" evidence="4">
    <location>
        <begin position="588"/>
        <end position="598"/>
    </location>
</feature>
<feature type="helix" evidence="4">
    <location>
        <begin position="610"/>
        <end position="624"/>
    </location>
</feature>
<feature type="strand" evidence="4">
    <location>
        <begin position="626"/>
        <end position="628"/>
    </location>
</feature>
<feature type="strand" evidence="4">
    <location>
        <begin position="630"/>
        <end position="632"/>
    </location>
</feature>
<feature type="helix" evidence="4">
    <location>
        <begin position="636"/>
        <end position="645"/>
    </location>
</feature>
<feature type="strand" evidence="4">
    <location>
        <begin position="650"/>
        <end position="654"/>
    </location>
</feature>
<feature type="helix" evidence="4">
    <location>
        <begin position="655"/>
        <end position="658"/>
    </location>
</feature>
<feature type="strand" evidence="4">
    <location>
        <begin position="661"/>
        <end position="664"/>
    </location>
</feature>
<feature type="strand" evidence="4">
    <location>
        <begin position="667"/>
        <end position="669"/>
    </location>
</feature>
<feature type="helix" evidence="4">
    <location>
        <begin position="673"/>
        <end position="686"/>
    </location>
</feature>
<feature type="strand" evidence="4">
    <location>
        <begin position="691"/>
        <end position="697"/>
    </location>
</feature>
<feature type="strand" evidence="4">
    <location>
        <begin position="711"/>
        <end position="717"/>
    </location>
</feature>
<feature type="helix" evidence="4">
    <location>
        <begin position="731"/>
        <end position="733"/>
    </location>
</feature>
<feature type="strand" evidence="4">
    <location>
        <begin position="738"/>
        <end position="743"/>
    </location>
</feature>
<feature type="strand" evidence="4">
    <location>
        <begin position="756"/>
        <end position="759"/>
    </location>
</feature>
<feature type="helix" evidence="4">
    <location>
        <begin position="762"/>
        <end position="764"/>
    </location>
</feature>
<feature type="strand" evidence="4">
    <location>
        <begin position="768"/>
        <end position="775"/>
    </location>
</feature>
<feature type="strand" evidence="4">
    <location>
        <begin position="777"/>
        <end position="782"/>
    </location>
</feature>
<feature type="strand" evidence="4">
    <location>
        <begin position="784"/>
        <end position="786"/>
    </location>
</feature>
<feature type="helix" evidence="4">
    <location>
        <begin position="787"/>
        <end position="789"/>
    </location>
</feature>
<feature type="strand" evidence="4">
    <location>
        <begin position="800"/>
        <end position="804"/>
    </location>
</feature>
<feature type="turn" evidence="4">
    <location>
        <begin position="806"/>
        <end position="808"/>
    </location>
</feature>
<feature type="strand" evidence="4">
    <location>
        <begin position="812"/>
        <end position="816"/>
    </location>
</feature>
<feature type="strand" evidence="4">
    <location>
        <begin position="818"/>
        <end position="826"/>
    </location>
</feature>
<feature type="helix" evidence="4">
    <location>
        <begin position="854"/>
        <end position="857"/>
    </location>
</feature>
<feature type="strand" evidence="4">
    <location>
        <begin position="861"/>
        <end position="863"/>
    </location>
</feature>
<feature type="helix" evidence="4">
    <location>
        <begin position="875"/>
        <end position="877"/>
    </location>
</feature>
<feature type="helix" evidence="4">
    <location>
        <begin position="879"/>
        <end position="885"/>
    </location>
</feature>
<feature type="helix" evidence="4">
    <location>
        <begin position="887"/>
        <end position="892"/>
    </location>
</feature>
<feature type="strand" evidence="4">
    <location>
        <begin position="896"/>
        <end position="899"/>
    </location>
</feature>
<feature type="strand" evidence="4">
    <location>
        <begin position="909"/>
        <end position="911"/>
    </location>
</feature>
<feature type="helix" evidence="4">
    <location>
        <begin position="912"/>
        <end position="915"/>
    </location>
</feature>
<feature type="strand" evidence="4">
    <location>
        <begin position="922"/>
        <end position="924"/>
    </location>
</feature>
<feature type="helix" evidence="4">
    <location>
        <begin position="940"/>
        <end position="952"/>
    </location>
</feature>
<feature type="strand" evidence="4">
    <location>
        <begin position="956"/>
        <end position="961"/>
    </location>
</feature>
<feature type="strand" evidence="4">
    <location>
        <begin position="964"/>
        <end position="966"/>
    </location>
</feature>
<feature type="helix" evidence="4">
    <location>
        <begin position="1008"/>
        <end position="1012"/>
    </location>
</feature>
<feature type="turn" evidence="4">
    <location>
        <begin position="1013"/>
        <end position="1016"/>
    </location>
</feature>
<feature type="helix" evidence="4">
    <location>
        <begin position="1017"/>
        <end position="1023"/>
    </location>
</feature>
<feature type="helix" evidence="4">
    <location>
        <begin position="1025"/>
        <end position="1029"/>
    </location>
</feature>
<feature type="turn" evidence="4">
    <location>
        <begin position="1033"/>
        <end position="1035"/>
    </location>
</feature>
<feature type="helix" evidence="4">
    <location>
        <begin position="1050"/>
        <end position="1052"/>
    </location>
</feature>
<gene>
    <name type="primary">gtfD</name>
    <name type="ordered locus">SMU_910</name>
</gene>
<reference key="1">
    <citation type="journal article" date="1990" name="J. Gen. Microbiol.">
        <title>Nucleotide sequence of the Streptococcus mutans gtfD gene encoding the glucosyltransferase-S enzyme.</title>
        <authorList>
            <person name="Honda O."/>
            <person name="Kato C."/>
            <person name="Kuramitsu H.K."/>
        </authorList>
    </citation>
    <scope>NUCLEOTIDE SEQUENCE [GENOMIC DNA]</scope>
    <source>
        <strain>GS-5</strain>
    </source>
</reference>
<reference key="2">
    <citation type="journal article" date="1998" name="FEMS Microbiol. Lett.">
        <title>Molecular analyses of glucosyltransferase genes among strains of Streptococcus mutans.</title>
        <authorList>
            <person name="Fujiwara T."/>
            <person name="Terao Y."/>
            <person name="Hoshino T."/>
            <person name="Kawabata S."/>
            <person name="Ooshima T."/>
            <person name="Sobue S."/>
            <person name="Kimura S."/>
            <person name="Hamada S."/>
        </authorList>
    </citation>
    <scope>NUCLEOTIDE SEQUENCE [GENOMIC DNA]</scope>
    <source>
        <strain>MT4239 / Serotype c</strain>
        <strain>MT4245 / Serotype e</strain>
        <strain>MT4251 / Serotype f</strain>
        <strain>MT4467 / Serotype e</strain>
        <strain>MT8148 / Serotype c</strain>
    </source>
</reference>
<reference key="3">
    <citation type="journal article" date="2002" name="Proc. Natl. Acad. Sci. U.S.A.">
        <title>Genome sequence of Streptococcus mutans UA159, a cariogenic dental pathogen.</title>
        <authorList>
            <person name="Ajdic D.J."/>
            <person name="McShan W.M."/>
            <person name="McLaughlin R.E."/>
            <person name="Savic G."/>
            <person name="Chang J."/>
            <person name="Carson M.B."/>
            <person name="Primeaux C."/>
            <person name="Tian R."/>
            <person name="Kenton S."/>
            <person name="Jia H.G."/>
            <person name="Lin S.P."/>
            <person name="Qian Y."/>
            <person name="Li S."/>
            <person name="Zhu H."/>
            <person name="Najar F.Z."/>
            <person name="Lai H."/>
            <person name="White J."/>
            <person name="Roe B.A."/>
            <person name="Ferretti J.J."/>
        </authorList>
    </citation>
    <scope>NUCLEOTIDE SEQUENCE [LARGE SCALE GENOMIC DNA]</scope>
    <source>
        <strain>ATCC 700610 / UA159</strain>
    </source>
</reference>
<accession>P49331</accession>
<accession>O69383</accession>
<accession>O69386</accession>
<accession>O69389</accession>
<accession>O69392</accession>
<accession>O69398</accession>
<protein>
    <recommendedName>
        <fullName>Glucosyltransferase-S</fullName>
        <shortName>GTF-S</shortName>
        <ecNumber>2.4.1.5</ecNumber>
    </recommendedName>
    <alternativeName>
        <fullName>Dextransucrase</fullName>
    </alternativeName>
    <alternativeName>
        <fullName>Sucrose 6-glucosyltransferase</fullName>
    </alternativeName>
</protein>
<organism>
    <name type="scientific">Streptococcus mutans serotype c (strain ATCC 700610 / UA159)</name>
    <dbReference type="NCBI Taxonomy" id="210007"/>
    <lineage>
        <taxon>Bacteria</taxon>
        <taxon>Bacillati</taxon>
        <taxon>Bacillota</taxon>
        <taxon>Bacilli</taxon>
        <taxon>Lactobacillales</taxon>
        <taxon>Streptococcaceae</taxon>
        <taxon>Streptococcus</taxon>
    </lineage>
</organism>
<evidence type="ECO:0000255" key="1"/>
<evidence type="ECO:0000256" key="2">
    <source>
        <dbReference type="SAM" id="MobiDB-lite"/>
    </source>
</evidence>
<evidence type="ECO:0000305" key="3"/>
<evidence type="ECO:0007829" key="4">
    <source>
        <dbReference type="PDB" id="8FN5"/>
    </source>
</evidence>